<name>RL32_BORDL</name>
<keyword id="KW-0687">Ribonucleoprotein</keyword>
<keyword id="KW-0689">Ribosomal protein</keyword>
<sequence length="60" mass="7035">MAVPKFKPSKSRSRTRRSINMRKKIPQFQECSNCGNLAIRHRICAKCGYYRNSQYLELGL</sequence>
<organism>
    <name type="scientific">Borrelia duttonii (strain Ly)</name>
    <dbReference type="NCBI Taxonomy" id="412419"/>
    <lineage>
        <taxon>Bacteria</taxon>
        <taxon>Pseudomonadati</taxon>
        <taxon>Spirochaetota</taxon>
        <taxon>Spirochaetia</taxon>
        <taxon>Spirochaetales</taxon>
        <taxon>Borreliaceae</taxon>
        <taxon>Borrelia</taxon>
    </lineage>
</organism>
<dbReference type="EMBL" id="CP000976">
    <property type="protein sequence ID" value="ACH93633.1"/>
    <property type="molecule type" value="Genomic_DNA"/>
</dbReference>
<dbReference type="RefSeq" id="WP_012538442.1">
    <property type="nucleotide sequence ID" value="NC_011229.1"/>
</dbReference>
<dbReference type="SMR" id="B5RMP7"/>
<dbReference type="STRING" id="412419.BDU_705"/>
<dbReference type="KEGG" id="bdu:BDU_705"/>
<dbReference type="eggNOG" id="COG0333">
    <property type="taxonomic scope" value="Bacteria"/>
</dbReference>
<dbReference type="HOGENOM" id="CLU_129084_1_0_12"/>
<dbReference type="OrthoDB" id="9812874at2"/>
<dbReference type="Proteomes" id="UP000000611">
    <property type="component" value="Chromosome"/>
</dbReference>
<dbReference type="GO" id="GO:0015934">
    <property type="term" value="C:large ribosomal subunit"/>
    <property type="evidence" value="ECO:0007669"/>
    <property type="project" value="InterPro"/>
</dbReference>
<dbReference type="GO" id="GO:0003735">
    <property type="term" value="F:structural constituent of ribosome"/>
    <property type="evidence" value="ECO:0007669"/>
    <property type="project" value="InterPro"/>
</dbReference>
<dbReference type="GO" id="GO:0006412">
    <property type="term" value="P:translation"/>
    <property type="evidence" value="ECO:0007669"/>
    <property type="project" value="UniProtKB-UniRule"/>
</dbReference>
<dbReference type="HAMAP" id="MF_00340">
    <property type="entry name" value="Ribosomal_bL32"/>
    <property type="match status" value="1"/>
</dbReference>
<dbReference type="InterPro" id="IPR002677">
    <property type="entry name" value="Ribosomal_bL32"/>
</dbReference>
<dbReference type="InterPro" id="IPR044957">
    <property type="entry name" value="Ribosomal_bL32_bact"/>
</dbReference>
<dbReference type="InterPro" id="IPR011332">
    <property type="entry name" value="Ribosomal_zn-bd"/>
</dbReference>
<dbReference type="NCBIfam" id="TIGR01031">
    <property type="entry name" value="rpmF_bact"/>
    <property type="match status" value="1"/>
</dbReference>
<dbReference type="PANTHER" id="PTHR35534">
    <property type="entry name" value="50S RIBOSOMAL PROTEIN L32"/>
    <property type="match status" value="1"/>
</dbReference>
<dbReference type="PANTHER" id="PTHR35534:SF1">
    <property type="entry name" value="LARGE RIBOSOMAL SUBUNIT PROTEIN BL32"/>
    <property type="match status" value="1"/>
</dbReference>
<dbReference type="Pfam" id="PF01783">
    <property type="entry name" value="Ribosomal_L32p"/>
    <property type="match status" value="1"/>
</dbReference>
<dbReference type="SUPFAM" id="SSF57829">
    <property type="entry name" value="Zn-binding ribosomal proteins"/>
    <property type="match status" value="1"/>
</dbReference>
<gene>
    <name evidence="1" type="primary">rpmF</name>
    <name type="ordered locus">BDU_705</name>
</gene>
<comment type="similarity">
    <text evidence="1">Belongs to the bacterial ribosomal protein bL32 family.</text>
</comment>
<proteinExistence type="inferred from homology"/>
<evidence type="ECO:0000255" key="1">
    <source>
        <dbReference type="HAMAP-Rule" id="MF_00340"/>
    </source>
</evidence>
<evidence type="ECO:0000305" key="2"/>
<reference key="1">
    <citation type="journal article" date="2008" name="PLoS Genet.">
        <title>The genome of Borrelia recurrentis, the agent of deadly louse-borne relapsing fever, is a degraded subset of tick-borne Borrelia duttonii.</title>
        <authorList>
            <person name="Lescot M."/>
            <person name="Audic S."/>
            <person name="Robert C."/>
            <person name="Nguyen T.T."/>
            <person name="Blanc G."/>
            <person name="Cutler S.J."/>
            <person name="Wincker P."/>
            <person name="Couloux A."/>
            <person name="Claverie J.-M."/>
            <person name="Raoult D."/>
            <person name="Drancourt M."/>
        </authorList>
    </citation>
    <scope>NUCLEOTIDE SEQUENCE [LARGE SCALE GENOMIC DNA]</scope>
    <source>
        <strain>Ly</strain>
    </source>
</reference>
<accession>B5RMP7</accession>
<protein>
    <recommendedName>
        <fullName evidence="1">Large ribosomal subunit protein bL32</fullName>
    </recommendedName>
    <alternativeName>
        <fullName evidence="2">50S ribosomal protein L32</fullName>
    </alternativeName>
</protein>
<feature type="chain" id="PRO_1000120092" description="Large ribosomal subunit protein bL32">
    <location>
        <begin position="1"/>
        <end position="60"/>
    </location>
</feature>